<sequence>MKISEEEVRHVAKLSKLSFSESETTTFATTLSKIVDMVELLNEVDTEGVAITTTMADKKNVMRQDVAEEGTDRALLFKNVPEKENHFIKVPAILDDGGDA</sequence>
<comment type="function">
    <text evidence="1">Allows the formation of correctly charged Asn-tRNA(Asn) or Gln-tRNA(Gln) through the transamidation of misacylated Asp-tRNA(Asn) or Glu-tRNA(Gln) in organisms which lack either or both of asparaginyl-tRNA or glutaminyl-tRNA synthetases. The reaction takes place in the presence of glutamine and ATP through an activated phospho-Asp-tRNA(Asn) or phospho-Glu-tRNA(Gln) (By similarity).</text>
</comment>
<comment type="catalytic activity">
    <reaction>
        <text>L-glutamyl-tRNA(Gln) + L-glutamine + ATP + H2O = L-glutaminyl-tRNA(Gln) + L-glutamate + ADP + phosphate + H(+)</text>
        <dbReference type="Rhea" id="RHEA:17521"/>
        <dbReference type="Rhea" id="RHEA-COMP:9681"/>
        <dbReference type="Rhea" id="RHEA-COMP:9684"/>
        <dbReference type="ChEBI" id="CHEBI:15377"/>
        <dbReference type="ChEBI" id="CHEBI:15378"/>
        <dbReference type="ChEBI" id="CHEBI:29985"/>
        <dbReference type="ChEBI" id="CHEBI:30616"/>
        <dbReference type="ChEBI" id="CHEBI:43474"/>
        <dbReference type="ChEBI" id="CHEBI:58359"/>
        <dbReference type="ChEBI" id="CHEBI:78520"/>
        <dbReference type="ChEBI" id="CHEBI:78521"/>
        <dbReference type="ChEBI" id="CHEBI:456216"/>
    </reaction>
</comment>
<comment type="catalytic activity">
    <reaction>
        <text>L-aspartyl-tRNA(Asn) + L-glutamine + ATP + H2O = L-asparaginyl-tRNA(Asn) + L-glutamate + ADP + phosphate + 2 H(+)</text>
        <dbReference type="Rhea" id="RHEA:14513"/>
        <dbReference type="Rhea" id="RHEA-COMP:9674"/>
        <dbReference type="Rhea" id="RHEA-COMP:9677"/>
        <dbReference type="ChEBI" id="CHEBI:15377"/>
        <dbReference type="ChEBI" id="CHEBI:15378"/>
        <dbReference type="ChEBI" id="CHEBI:29985"/>
        <dbReference type="ChEBI" id="CHEBI:30616"/>
        <dbReference type="ChEBI" id="CHEBI:43474"/>
        <dbReference type="ChEBI" id="CHEBI:58359"/>
        <dbReference type="ChEBI" id="CHEBI:78515"/>
        <dbReference type="ChEBI" id="CHEBI:78516"/>
        <dbReference type="ChEBI" id="CHEBI:456216"/>
    </reaction>
</comment>
<comment type="subunit">
    <text evidence="1">Heterotrimer of A, B and C subunits.</text>
</comment>
<comment type="mass spectrometry"/>
<comment type="similarity">
    <text evidence="3">Belongs to the GatC family.</text>
</comment>
<comment type="sequence caution" evidence="3">
    <conflict type="erroneous initiation">
        <sequence resource="EMBL-CDS" id="AAT87637"/>
    </conflict>
</comment>
<proteinExistence type="evidence at protein level"/>
<gene>
    <name type="primary">gatC</name>
    <name type="ordered locus">M6_Spy1502</name>
</gene>
<keyword id="KW-0067">ATP-binding</keyword>
<keyword id="KW-0903">Direct protein sequencing</keyword>
<keyword id="KW-0436">Ligase</keyword>
<keyword id="KW-0547">Nucleotide-binding</keyword>
<keyword id="KW-0648">Protein biosynthesis</keyword>
<reference key="1">
    <citation type="journal article" date="2004" name="J. Infect. Dis.">
        <title>Progress toward characterization of the group A Streptococcus metagenome: complete genome sequence of a macrolide-resistant serotype M6 strain.</title>
        <authorList>
            <person name="Banks D.J."/>
            <person name="Porcella S.F."/>
            <person name="Barbian K.D."/>
            <person name="Beres S.B."/>
            <person name="Philips L.E."/>
            <person name="Voyich J.M."/>
            <person name="DeLeo F.R."/>
            <person name="Martin J.M."/>
            <person name="Somerville G.A."/>
            <person name="Musser J.M."/>
        </authorList>
    </citation>
    <scope>NUCLEOTIDE SEQUENCE [LARGE SCALE GENOMIC DNA]</scope>
    <source>
        <strain>ATCC BAA-946 / MGAS10394</strain>
    </source>
</reference>
<reference key="2">
    <citation type="submission" date="2000-05" db="UniProtKB">
        <title>Two-dimensional gel electrophoresis map of Streptococcus pyogenes proteins.</title>
        <authorList>
            <person name="Hogan D.A."/>
            <person name="Du P."/>
            <person name="Stevenson T.I."/>
            <person name="Whitton M."/>
            <person name="Kilby G.W."/>
            <person name="Rogers J."/>
            <person name="VanBogelen R.A."/>
        </authorList>
    </citation>
    <scope>PROTEIN SEQUENCE OF 17-59 AND 74-78</scope>
    <scope>MASS SPECTROMETRY</scope>
    <source>
        <strain>JRS4 / Serotype M6</strain>
    </source>
</reference>
<evidence type="ECO:0000250" key="1"/>
<evidence type="ECO:0000269" key="2">
    <source ref="2"/>
</evidence>
<evidence type="ECO:0000305" key="3"/>
<protein>
    <recommendedName>
        <fullName>Glutamyl-tRNA(Gln) amidotransferase subunit C</fullName>
        <shortName>Glu-ADT subunit C</shortName>
        <ecNumber>6.3.5.-</ecNumber>
    </recommendedName>
</protein>
<name>GATC_STRP6</name>
<organism>
    <name type="scientific">Streptococcus pyogenes serotype M6 (strain ATCC BAA-946 / MGAS10394)</name>
    <dbReference type="NCBI Taxonomy" id="286636"/>
    <lineage>
        <taxon>Bacteria</taxon>
        <taxon>Bacillati</taxon>
        <taxon>Bacillota</taxon>
        <taxon>Bacilli</taxon>
        <taxon>Lactobacillales</taxon>
        <taxon>Streptococcaceae</taxon>
        <taxon>Streptococcus</taxon>
    </lineage>
</organism>
<accession>Q5XAC6</accession>
<accession>P82582</accession>
<accession>Q99YB9</accession>
<feature type="chain" id="PRO_0000105347" description="Glutamyl-tRNA(Gln) amidotransferase subunit C">
    <location>
        <begin position="1"/>
        <end position="100"/>
    </location>
</feature>
<dbReference type="EC" id="6.3.5.-"/>
<dbReference type="EMBL" id="CP000003">
    <property type="protein sequence ID" value="AAT87637.1"/>
    <property type="status" value="ALT_INIT"/>
    <property type="molecule type" value="Genomic_DNA"/>
</dbReference>
<dbReference type="RefSeq" id="WP_002988561.1">
    <property type="nucleotide sequence ID" value="NC_006086.1"/>
</dbReference>
<dbReference type="SMR" id="Q5XAC6"/>
<dbReference type="GeneID" id="83690022"/>
<dbReference type="KEGG" id="spa:M6_Spy1502"/>
<dbReference type="HOGENOM" id="CLU_105899_1_2_9"/>
<dbReference type="Proteomes" id="UP000001167">
    <property type="component" value="Chromosome"/>
</dbReference>
<dbReference type="GO" id="GO:0050566">
    <property type="term" value="F:asparaginyl-tRNA synthase (glutamine-hydrolyzing) activity"/>
    <property type="evidence" value="ECO:0007669"/>
    <property type="project" value="RHEA"/>
</dbReference>
<dbReference type="GO" id="GO:0005524">
    <property type="term" value="F:ATP binding"/>
    <property type="evidence" value="ECO:0007669"/>
    <property type="project" value="UniProtKB-KW"/>
</dbReference>
<dbReference type="GO" id="GO:0050567">
    <property type="term" value="F:glutaminyl-tRNA synthase (glutamine-hydrolyzing) activity"/>
    <property type="evidence" value="ECO:0007669"/>
    <property type="project" value="UniProtKB-UniRule"/>
</dbReference>
<dbReference type="GO" id="GO:0070681">
    <property type="term" value="P:glutaminyl-tRNAGln biosynthesis via transamidation"/>
    <property type="evidence" value="ECO:0007669"/>
    <property type="project" value="TreeGrafter"/>
</dbReference>
<dbReference type="GO" id="GO:0006450">
    <property type="term" value="P:regulation of translational fidelity"/>
    <property type="evidence" value="ECO:0007669"/>
    <property type="project" value="InterPro"/>
</dbReference>
<dbReference type="GO" id="GO:0006412">
    <property type="term" value="P:translation"/>
    <property type="evidence" value="ECO:0007669"/>
    <property type="project" value="UniProtKB-UniRule"/>
</dbReference>
<dbReference type="Gene3D" id="1.10.20.60">
    <property type="entry name" value="Glu-tRNAGln amidotransferase C subunit, N-terminal domain"/>
    <property type="match status" value="1"/>
</dbReference>
<dbReference type="HAMAP" id="MF_00122">
    <property type="entry name" value="GatC"/>
    <property type="match status" value="1"/>
</dbReference>
<dbReference type="InterPro" id="IPR036113">
    <property type="entry name" value="Asp/Glu-ADT_sf_sub_c"/>
</dbReference>
<dbReference type="InterPro" id="IPR003837">
    <property type="entry name" value="GatC"/>
</dbReference>
<dbReference type="NCBIfam" id="TIGR00135">
    <property type="entry name" value="gatC"/>
    <property type="match status" value="1"/>
</dbReference>
<dbReference type="PANTHER" id="PTHR15004">
    <property type="entry name" value="GLUTAMYL-TRNA(GLN) AMIDOTRANSFERASE SUBUNIT C, MITOCHONDRIAL"/>
    <property type="match status" value="1"/>
</dbReference>
<dbReference type="PANTHER" id="PTHR15004:SF0">
    <property type="entry name" value="GLUTAMYL-TRNA(GLN) AMIDOTRANSFERASE SUBUNIT C, MITOCHONDRIAL"/>
    <property type="match status" value="1"/>
</dbReference>
<dbReference type="Pfam" id="PF02686">
    <property type="entry name" value="GatC"/>
    <property type="match status" value="1"/>
</dbReference>
<dbReference type="SUPFAM" id="SSF141000">
    <property type="entry name" value="Glu-tRNAGln amidotransferase C subunit"/>
    <property type="match status" value="1"/>
</dbReference>